<organismHost>
    <name type="scientific">Escherichia coli O157:H7</name>
    <dbReference type="NCBI Taxonomy" id="83334"/>
</organismHost>
<gene>
    <name type="primary">Rz</name>
</gene>
<dbReference type="EMBL" id="AF125520">
    <property type="protein sequence ID" value="AAD25452.1"/>
    <property type="molecule type" value="Genomic_DNA"/>
</dbReference>
<dbReference type="RefSeq" id="NP_049507.1">
    <property type="nucleotide sequence ID" value="NC_000924.1"/>
</dbReference>
<dbReference type="SMR" id="Q9XJJ6"/>
<dbReference type="GeneID" id="1262012"/>
<dbReference type="KEGG" id="vg:1262012"/>
<dbReference type="OrthoDB" id="12441at10239"/>
<dbReference type="Proteomes" id="UP000002135">
    <property type="component" value="Genome"/>
</dbReference>
<dbReference type="GO" id="GO:0020002">
    <property type="term" value="C:host cell plasma membrane"/>
    <property type="evidence" value="ECO:0007669"/>
    <property type="project" value="UniProtKB-SubCell"/>
</dbReference>
<dbReference type="GO" id="GO:0016020">
    <property type="term" value="C:membrane"/>
    <property type="evidence" value="ECO:0007669"/>
    <property type="project" value="UniProtKB-KW"/>
</dbReference>
<dbReference type="GO" id="GO:0044659">
    <property type="term" value="P:viral release from host cell by cytolysis"/>
    <property type="evidence" value="ECO:0007669"/>
    <property type="project" value="UniProtKB-UniRule"/>
</dbReference>
<dbReference type="HAMAP" id="MF_04137">
    <property type="entry name" value="I_SPANIN_LAMBDA"/>
    <property type="match status" value="1"/>
</dbReference>
<dbReference type="InterPro" id="IPR004929">
    <property type="entry name" value="I-spanin"/>
</dbReference>
<dbReference type="Pfam" id="PF03245">
    <property type="entry name" value="Phage_lysis"/>
    <property type="match status" value="1"/>
</dbReference>
<comment type="function">
    <text evidence="2">Component of the spanin complex that disrupts the host outer membrane and participates in cell lysis during virus exit. The spanin complex conducts the final step in host lysis by disrupting the outer membrane after holin and endolysin have permeabilized the inner membrane and degraded the host peptidoglycans. Host outer membrane disruption is due to local fusion between the inner and outer membrane performed by the spanin complex.</text>
</comment>
<comment type="subunit">
    <text evidence="2">Homodimer; disulfide-linked. Interacts (via C-terminus) with the spanin outer lipoprotein subunit (via C-terminus). Part of the spanin complex which spans the entire periplasmic space. The spanin complex is composed of one homodimer of the i-spanin linked by intermolecular disulfide bonds involving two Cys residues and one homodimer of the o-spanin covalently linked by an intermolecular disulfide bond involving one Cys.</text>
</comment>
<comment type="subcellular location">
    <subcellularLocation>
        <location evidence="2">Host cell inner membrane</location>
        <topology evidence="2">Single-pass type II membrane protein</topology>
        <orientation evidence="2">Periplasmic side</orientation>
    </subcellularLocation>
</comment>
<comment type="domain">
    <text evidence="2">The coiled coil region is probably involved in host membrane fusion leading to lysis.</text>
</comment>
<comment type="similarity">
    <text evidence="2">Belongs to the Lambdavirus i-spanin family.</text>
</comment>
<evidence type="ECO:0000255" key="1"/>
<evidence type="ECO:0000255" key="2">
    <source>
        <dbReference type="HAMAP-Rule" id="MF_04137"/>
    </source>
</evidence>
<accession>Q9XJJ6</accession>
<feature type="chain" id="PRO_0000423377" description="Spanin, inner membrane subunit">
    <location>
        <begin position="1"/>
        <end position="154"/>
    </location>
</feature>
<feature type="topological domain" description="Cytoplasmic" evidence="1">
    <location>
        <begin position="1"/>
        <end position="3"/>
    </location>
</feature>
<feature type="transmembrane region" description="Helical; Signal-anchor for type II membrane protein" evidence="1">
    <location>
        <begin position="4"/>
        <end position="24"/>
    </location>
</feature>
<feature type="topological domain" description="Periplasmic" evidence="1">
    <location>
        <begin position="25"/>
        <end position="154"/>
    </location>
</feature>
<feature type="coiled-coil region" evidence="2">
    <location>
        <begin position="37"/>
        <end position="92"/>
    </location>
</feature>
<feature type="disulfide bond" description="Interchain" evidence="2">
    <location>
        <position position="99"/>
    </location>
</feature>
<feature type="disulfide bond" description="Interchain" evidence="2">
    <location>
        <position position="153"/>
    </location>
</feature>
<sequence>MNRVLCVVIIVLAVGYGALWLATNHYRDNALTYKAQRDKKARELEQANATITDMQVRQRDVAALDAKYSRELADARAENETLRADVAAGRKRLRINATCSGTVREATGTSGVDNATGPRLADTAERDYFILRERLITMQKQLEGTQKYINEQCR</sequence>
<protein>
    <recommendedName>
        <fullName evidence="2">Spanin, inner membrane subunit</fullName>
        <shortName evidence="2">i-spanin</shortName>
    </recommendedName>
    <alternativeName>
        <fullName evidence="2">Lysis protein Rz</fullName>
    </alternativeName>
</protein>
<keyword id="KW-0175">Coiled coil</keyword>
<keyword id="KW-0204">Cytolysis</keyword>
<keyword id="KW-1015">Disulfide bond</keyword>
<keyword id="KW-1030">Host cell inner membrane</keyword>
<keyword id="KW-0578">Host cell lysis by virus</keyword>
<keyword id="KW-1032">Host cell membrane</keyword>
<keyword id="KW-1043">Host membrane</keyword>
<keyword id="KW-0472">Membrane</keyword>
<keyword id="KW-1185">Reference proteome</keyword>
<keyword id="KW-0735">Signal-anchor</keyword>
<keyword id="KW-0812">Transmembrane</keyword>
<keyword id="KW-1133">Transmembrane helix</keyword>
<keyword id="KW-1188">Viral release from host cell</keyword>
<reference key="1">
    <citation type="journal article" date="1999" name="J. Bacteriol.">
        <title>Sequence of Shiga toxin 2 phage 933W from Escherichia coli O157:H7: Shiga toxin as a phage late-gene product.</title>
        <authorList>
            <person name="Plunkett G. III"/>
            <person name="Rose D.J."/>
            <person name="Durfee T.J."/>
            <person name="Blattner F.R."/>
        </authorList>
    </citation>
    <scope>NUCLEOTIDE SEQUENCE [GENOMIC DNA]</scope>
</reference>
<name>SPAN1_BP933</name>
<organism>
    <name type="scientific">Escherichia phage 933W</name>
    <name type="common">Bacteriophage 933W</name>
    <dbReference type="NCBI Taxonomy" id="10730"/>
    <lineage>
        <taxon>Viruses</taxon>
        <taxon>Duplodnaviria</taxon>
        <taxon>Heunggongvirae</taxon>
        <taxon>Uroviricota</taxon>
        <taxon>Caudoviricetes</taxon>
        <taxon>Sepvirinae</taxon>
        <taxon>Traversvirus</taxon>
        <taxon>Traversvirus tv933W</taxon>
    </lineage>
</organism>
<proteinExistence type="inferred from homology"/>